<protein>
    <recommendedName>
        <fullName evidence="1">Glycerol-3-phosphate acyltransferase</fullName>
    </recommendedName>
    <alternativeName>
        <fullName evidence="1">Acyl-PO4 G3P acyltransferase</fullName>
    </alternativeName>
    <alternativeName>
        <fullName evidence="1">Acyl-phosphate--glycerol-3-phosphate acyltransferase</fullName>
    </alternativeName>
    <alternativeName>
        <fullName evidence="1">G3P acyltransferase</fullName>
        <shortName evidence="1">GPAT</shortName>
        <ecNumber evidence="1">2.3.1.275</ecNumber>
    </alternativeName>
    <alternativeName>
        <fullName evidence="1">Lysophosphatidic acid synthase</fullName>
        <shortName evidence="1">LPA synthase</shortName>
    </alternativeName>
</protein>
<sequence length="213" mass="23369">MKLLLFITIAYLLGSIPTGLWIGQYFYHINLREHGSGNTGTTNTFRILGVKAGTATLAIDMFKGTLSILLPIIFGMTSISSIAIGFFAVLGHTFPIFANFKGGKAVATSAGVLLGFAPLYLFFLASIFVLVLYLFSMISLASVVSAIVGVLSVLTFPAIHFLLPNYDYFLTFIVILLAFIIIIRHKDNISRIKHHTENLIPWGLNLSKQVPKK</sequence>
<keyword id="KW-1003">Cell membrane</keyword>
<keyword id="KW-0444">Lipid biosynthesis</keyword>
<keyword id="KW-0443">Lipid metabolism</keyword>
<keyword id="KW-0472">Membrane</keyword>
<keyword id="KW-0594">Phospholipid biosynthesis</keyword>
<keyword id="KW-1208">Phospholipid metabolism</keyword>
<keyword id="KW-1185">Reference proteome</keyword>
<keyword id="KW-0808">Transferase</keyword>
<keyword id="KW-0812">Transmembrane</keyword>
<keyword id="KW-1133">Transmembrane helix</keyword>
<comment type="function">
    <text evidence="1">Catalyzes the transfer of an acyl group from acyl-phosphate (acyl-PO(4)) to glycerol-3-phosphate (G3P) to form lysophosphatidic acid (LPA). This enzyme utilizes acyl-phosphate as fatty acyl donor, but not acyl-CoA or acyl-ACP.</text>
</comment>
<comment type="catalytic activity">
    <reaction evidence="1">
        <text>an acyl phosphate + sn-glycerol 3-phosphate = a 1-acyl-sn-glycero-3-phosphate + phosphate</text>
        <dbReference type="Rhea" id="RHEA:34075"/>
        <dbReference type="ChEBI" id="CHEBI:43474"/>
        <dbReference type="ChEBI" id="CHEBI:57597"/>
        <dbReference type="ChEBI" id="CHEBI:57970"/>
        <dbReference type="ChEBI" id="CHEBI:59918"/>
        <dbReference type="EC" id="2.3.1.275"/>
    </reaction>
</comment>
<comment type="pathway">
    <text evidence="1">Lipid metabolism; phospholipid metabolism.</text>
</comment>
<comment type="subunit">
    <text evidence="1">Probably interacts with PlsX.</text>
</comment>
<comment type="subcellular location">
    <subcellularLocation>
        <location evidence="1">Cell membrane</location>
        <topology evidence="1">Multi-pass membrane protein</topology>
    </subcellularLocation>
</comment>
<comment type="similarity">
    <text evidence="1">Belongs to the PlsY family.</text>
</comment>
<accession>P67168</accession>
<accession>Q48Z90</accession>
<accession>Q8K7U8</accession>
<accession>Q9A070</accession>
<proteinExistence type="inferred from homology"/>
<reference key="1">
    <citation type="journal article" date="2001" name="Proc. Natl. Acad. Sci. U.S.A.">
        <title>Complete genome sequence of an M1 strain of Streptococcus pyogenes.</title>
        <authorList>
            <person name="Ferretti J.J."/>
            <person name="McShan W.M."/>
            <person name="Ajdic D.J."/>
            <person name="Savic D.J."/>
            <person name="Savic G."/>
            <person name="Lyon K."/>
            <person name="Primeaux C."/>
            <person name="Sezate S."/>
            <person name="Suvorov A.N."/>
            <person name="Kenton S."/>
            <person name="Lai H.S."/>
            <person name="Lin S.P."/>
            <person name="Qian Y."/>
            <person name="Jia H.G."/>
            <person name="Najar F.Z."/>
            <person name="Ren Q."/>
            <person name="Zhu H."/>
            <person name="Song L."/>
            <person name="White J."/>
            <person name="Yuan X."/>
            <person name="Clifton S.W."/>
            <person name="Roe B.A."/>
            <person name="McLaughlin R.E."/>
        </authorList>
    </citation>
    <scope>NUCLEOTIDE SEQUENCE [LARGE SCALE GENOMIC DNA]</scope>
    <source>
        <strain>ATCC 700294 / SF370 / Serotype M1</strain>
    </source>
</reference>
<reference key="2">
    <citation type="journal article" date="2005" name="J. Infect. Dis.">
        <title>Evolutionary origin and emergence of a highly successful clone of serotype M1 group A Streptococcus involved multiple horizontal gene transfer events.</title>
        <authorList>
            <person name="Sumby P."/>
            <person name="Porcella S.F."/>
            <person name="Madrigal A.G."/>
            <person name="Barbian K.D."/>
            <person name="Virtaneva K."/>
            <person name="Ricklefs S.M."/>
            <person name="Sturdevant D.E."/>
            <person name="Graham M.R."/>
            <person name="Vuopio-Varkila J."/>
            <person name="Hoe N.P."/>
            <person name="Musser J.M."/>
        </authorList>
    </citation>
    <scope>NUCLEOTIDE SEQUENCE [LARGE SCALE GENOMIC DNA]</scope>
    <source>
        <strain>ATCC BAA-947 / MGAS5005 / Serotype M1</strain>
    </source>
</reference>
<dbReference type="EC" id="2.3.1.275" evidence="1"/>
<dbReference type="EMBL" id="AE004092">
    <property type="protein sequence ID" value="AAK33824.1"/>
    <property type="molecule type" value="Genomic_DNA"/>
</dbReference>
<dbReference type="EMBL" id="CP000017">
    <property type="protein sequence ID" value="AAZ51328.1"/>
    <property type="molecule type" value="Genomic_DNA"/>
</dbReference>
<dbReference type="RefSeq" id="NP_269103.1">
    <property type="nucleotide sequence ID" value="NC_002737.2"/>
</dbReference>
<dbReference type="SMR" id="P67168"/>
<dbReference type="PaxDb" id="1314-HKU360_00720"/>
<dbReference type="KEGG" id="spy:SPy_0908"/>
<dbReference type="KEGG" id="spz:M5005_Spy0710"/>
<dbReference type="PATRIC" id="fig|160490.10.peg.780"/>
<dbReference type="HOGENOM" id="CLU_081254_3_0_9"/>
<dbReference type="OMA" id="PVWLGFK"/>
<dbReference type="UniPathway" id="UPA00085"/>
<dbReference type="Proteomes" id="UP000000750">
    <property type="component" value="Chromosome"/>
</dbReference>
<dbReference type="GO" id="GO:0005886">
    <property type="term" value="C:plasma membrane"/>
    <property type="evidence" value="ECO:0007669"/>
    <property type="project" value="UniProtKB-SubCell"/>
</dbReference>
<dbReference type="GO" id="GO:0043772">
    <property type="term" value="F:acyl-phosphate glycerol-3-phosphate acyltransferase activity"/>
    <property type="evidence" value="ECO:0007669"/>
    <property type="project" value="UniProtKB-UniRule"/>
</dbReference>
<dbReference type="GO" id="GO:0008654">
    <property type="term" value="P:phospholipid biosynthetic process"/>
    <property type="evidence" value="ECO:0007669"/>
    <property type="project" value="UniProtKB-UniRule"/>
</dbReference>
<dbReference type="HAMAP" id="MF_01043">
    <property type="entry name" value="PlsY"/>
    <property type="match status" value="1"/>
</dbReference>
<dbReference type="InterPro" id="IPR003811">
    <property type="entry name" value="G3P_acylTferase_PlsY"/>
</dbReference>
<dbReference type="NCBIfam" id="TIGR00023">
    <property type="entry name" value="glycerol-3-phosphate 1-O-acyltransferase PlsY"/>
    <property type="match status" value="1"/>
</dbReference>
<dbReference type="PANTHER" id="PTHR30309:SF0">
    <property type="entry name" value="GLYCEROL-3-PHOSPHATE ACYLTRANSFERASE-RELATED"/>
    <property type="match status" value="1"/>
</dbReference>
<dbReference type="PANTHER" id="PTHR30309">
    <property type="entry name" value="INNER MEMBRANE PROTEIN YGIH"/>
    <property type="match status" value="1"/>
</dbReference>
<dbReference type="Pfam" id="PF02660">
    <property type="entry name" value="G3P_acyltransf"/>
    <property type="match status" value="1"/>
</dbReference>
<dbReference type="SMART" id="SM01207">
    <property type="entry name" value="G3P_acyltransf"/>
    <property type="match status" value="1"/>
</dbReference>
<name>PLSY_STRP1</name>
<feature type="chain" id="PRO_0000188466" description="Glycerol-3-phosphate acyltransferase">
    <location>
        <begin position="1"/>
        <end position="213"/>
    </location>
</feature>
<feature type="transmembrane region" description="Helical" evidence="1">
    <location>
        <begin position="3"/>
        <end position="23"/>
    </location>
</feature>
<feature type="transmembrane region" description="Helical" evidence="1">
    <location>
        <begin position="68"/>
        <end position="88"/>
    </location>
</feature>
<feature type="transmembrane region" description="Helical" evidence="1">
    <location>
        <begin position="112"/>
        <end position="132"/>
    </location>
</feature>
<feature type="transmembrane region" description="Helical" evidence="1">
    <location>
        <begin position="134"/>
        <end position="154"/>
    </location>
</feature>
<feature type="transmembrane region" description="Helical" evidence="1">
    <location>
        <begin position="163"/>
        <end position="183"/>
    </location>
</feature>
<evidence type="ECO:0000255" key="1">
    <source>
        <dbReference type="HAMAP-Rule" id="MF_01043"/>
    </source>
</evidence>
<gene>
    <name evidence="1" type="primary">plsY</name>
    <name type="ordered locus">SPy_0908</name>
    <name type="ordered locus">M5005_Spy0710</name>
</gene>
<organism>
    <name type="scientific">Streptococcus pyogenes serotype M1</name>
    <dbReference type="NCBI Taxonomy" id="301447"/>
    <lineage>
        <taxon>Bacteria</taxon>
        <taxon>Bacillati</taxon>
        <taxon>Bacillota</taxon>
        <taxon>Bacilli</taxon>
        <taxon>Lactobacillales</taxon>
        <taxon>Streptococcaceae</taxon>
        <taxon>Streptococcus</taxon>
    </lineage>
</organism>